<proteinExistence type="inferred from homology"/>
<gene>
    <name evidence="1" type="primary">glsA</name>
    <name type="ordered locus">SG1594</name>
</gene>
<protein>
    <recommendedName>
        <fullName evidence="1">Glutaminase</fullName>
        <ecNumber evidence="1">3.5.1.2</ecNumber>
    </recommendedName>
</protein>
<organism>
    <name type="scientific">Salmonella gallinarum (strain 287/91 / NCTC 13346)</name>
    <dbReference type="NCBI Taxonomy" id="550538"/>
    <lineage>
        <taxon>Bacteria</taxon>
        <taxon>Pseudomonadati</taxon>
        <taxon>Pseudomonadota</taxon>
        <taxon>Gammaproteobacteria</taxon>
        <taxon>Enterobacterales</taxon>
        <taxon>Enterobacteriaceae</taxon>
        <taxon>Salmonella</taxon>
    </lineage>
</organism>
<accession>B5RAE1</accession>
<dbReference type="EC" id="3.5.1.2" evidence="1"/>
<dbReference type="EMBL" id="AM933173">
    <property type="protein sequence ID" value="CAR37455.1"/>
    <property type="molecule type" value="Genomic_DNA"/>
</dbReference>
<dbReference type="SMR" id="B5RAE1"/>
<dbReference type="KEGG" id="seg:SG1594"/>
<dbReference type="HOGENOM" id="CLU_027932_1_1_6"/>
<dbReference type="Proteomes" id="UP000008321">
    <property type="component" value="Chromosome"/>
</dbReference>
<dbReference type="GO" id="GO:0004359">
    <property type="term" value="F:glutaminase activity"/>
    <property type="evidence" value="ECO:0007669"/>
    <property type="project" value="UniProtKB-UniRule"/>
</dbReference>
<dbReference type="GO" id="GO:0006537">
    <property type="term" value="P:glutamate biosynthetic process"/>
    <property type="evidence" value="ECO:0007669"/>
    <property type="project" value="TreeGrafter"/>
</dbReference>
<dbReference type="GO" id="GO:0006543">
    <property type="term" value="P:glutamine catabolic process"/>
    <property type="evidence" value="ECO:0007669"/>
    <property type="project" value="TreeGrafter"/>
</dbReference>
<dbReference type="FunFam" id="3.40.710.10:FF:000005">
    <property type="entry name" value="Glutaminase"/>
    <property type="match status" value="1"/>
</dbReference>
<dbReference type="Gene3D" id="3.40.710.10">
    <property type="entry name" value="DD-peptidase/beta-lactamase superfamily"/>
    <property type="match status" value="1"/>
</dbReference>
<dbReference type="HAMAP" id="MF_00313">
    <property type="entry name" value="Glutaminase"/>
    <property type="match status" value="1"/>
</dbReference>
<dbReference type="InterPro" id="IPR012338">
    <property type="entry name" value="Beta-lactam/transpept-like"/>
</dbReference>
<dbReference type="InterPro" id="IPR015868">
    <property type="entry name" value="Glutaminase"/>
</dbReference>
<dbReference type="NCBIfam" id="TIGR03814">
    <property type="entry name" value="Gln_ase"/>
    <property type="match status" value="1"/>
</dbReference>
<dbReference type="NCBIfam" id="NF002132">
    <property type="entry name" value="PRK00971.1-1"/>
    <property type="match status" value="1"/>
</dbReference>
<dbReference type="NCBIfam" id="NF002133">
    <property type="entry name" value="PRK00971.1-2"/>
    <property type="match status" value="1"/>
</dbReference>
<dbReference type="PANTHER" id="PTHR12544">
    <property type="entry name" value="GLUTAMINASE"/>
    <property type="match status" value="1"/>
</dbReference>
<dbReference type="PANTHER" id="PTHR12544:SF29">
    <property type="entry name" value="GLUTAMINASE"/>
    <property type="match status" value="1"/>
</dbReference>
<dbReference type="Pfam" id="PF04960">
    <property type="entry name" value="Glutaminase"/>
    <property type="match status" value="1"/>
</dbReference>
<dbReference type="SUPFAM" id="SSF56601">
    <property type="entry name" value="beta-lactamase/transpeptidase-like"/>
    <property type="match status" value="1"/>
</dbReference>
<reference key="1">
    <citation type="journal article" date="2008" name="Genome Res.">
        <title>Comparative genome analysis of Salmonella enteritidis PT4 and Salmonella gallinarum 287/91 provides insights into evolutionary and host adaptation pathways.</title>
        <authorList>
            <person name="Thomson N.R."/>
            <person name="Clayton D.J."/>
            <person name="Windhorst D."/>
            <person name="Vernikos G."/>
            <person name="Davidson S."/>
            <person name="Churcher C."/>
            <person name="Quail M.A."/>
            <person name="Stevens M."/>
            <person name="Jones M.A."/>
            <person name="Watson M."/>
            <person name="Barron A."/>
            <person name="Layton A."/>
            <person name="Pickard D."/>
            <person name="Kingsley R.A."/>
            <person name="Bignell A."/>
            <person name="Clark L."/>
            <person name="Harris B."/>
            <person name="Ormond D."/>
            <person name="Abdellah Z."/>
            <person name="Brooks K."/>
            <person name="Cherevach I."/>
            <person name="Chillingworth T."/>
            <person name="Woodward J."/>
            <person name="Norberczak H."/>
            <person name="Lord A."/>
            <person name="Arrowsmith C."/>
            <person name="Jagels K."/>
            <person name="Moule S."/>
            <person name="Mungall K."/>
            <person name="Saunders M."/>
            <person name="Whitehead S."/>
            <person name="Chabalgoity J.A."/>
            <person name="Maskell D."/>
            <person name="Humphreys T."/>
            <person name="Roberts M."/>
            <person name="Barrow P.A."/>
            <person name="Dougan G."/>
            <person name="Parkhill J."/>
        </authorList>
    </citation>
    <scope>NUCLEOTIDE SEQUENCE [LARGE SCALE GENOMIC DNA]</scope>
    <source>
        <strain>287/91 / NCTC 13346</strain>
    </source>
</reference>
<sequence>MAWAMDNAILETILQRVRPLIGQGKVADYIPALASVEGSKLGIAICTVDGQHYQAGDAHERFSIQSISKVLSLVVAMRHYPEEEIWQRVGKDPSGSPFNSLVQLEMEQGIPRNPFINAGALVVCDMLQGRLSAPRQRMLEVVRALCGVSDITYDATVARSEFEHSARNAAIAWLMKSFGNFHHDVPTVLQNYFHYCALKMSCMELARTFVFLANQGEAFHLDEPVVTPMQARQINALMATSGMYQNAGEFAWRVGLPAKSGVGGGIVAIVPHEMAIAVWSPELDPAGNSLAGIAALEQLTQTLGRSVY</sequence>
<keyword id="KW-0378">Hydrolase</keyword>
<feature type="chain" id="PRO_1000115707" description="Glutaminase">
    <location>
        <begin position="1"/>
        <end position="308"/>
    </location>
</feature>
<feature type="binding site" evidence="1">
    <location>
        <position position="66"/>
    </location>
    <ligand>
        <name>substrate</name>
    </ligand>
</feature>
<feature type="binding site" evidence="1">
    <location>
        <position position="117"/>
    </location>
    <ligand>
        <name>substrate</name>
    </ligand>
</feature>
<feature type="binding site" evidence="1">
    <location>
        <position position="161"/>
    </location>
    <ligand>
        <name>substrate</name>
    </ligand>
</feature>
<feature type="binding site" evidence="1">
    <location>
        <position position="168"/>
    </location>
    <ligand>
        <name>substrate</name>
    </ligand>
</feature>
<feature type="binding site" evidence="1">
    <location>
        <position position="192"/>
    </location>
    <ligand>
        <name>substrate</name>
    </ligand>
</feature>
<feature type="binding site" evidence="1">
    <location>
        <position position="244"/>
    </location>
    <ligand>
        <name>substrate</name>
    </ligand>
</feature>
<feature type="binding site" evidence="1">
    <location>
        <position position="262"/>
    </location>
    <ligand>
        <name>substrate</name>
    </ligand>
</feature>
<comment type="catalytic activity">
    <reaction evidence="1">
        <text>L-glutamine + H2O = L-glutamate + NH4(+)</text>
        <dbReference type="Rhea" id="RHEA:15889"/>
        <dbReference type="ChEBI" id="CHEBI:15377"/>
        <dbReference type="ChEBI" id="CHEBI:28938"/>
        <dbReference type="ChEBI" id="CHEBI:29985"/>
        <dbReference type="ChEBI" id="CHEBI:58359"/>
        <dbReference type="EC" id="3.5.1.2"/>
    </reaction>
</comment>
<comment type="subunit">
    <text evidence="1">Homotetramer.</text>
</comment>
<comment type="similarity">
    <text evidence="1">Belongs to the glutaminase family.</text>
</comment>
<name>GLSA_SALG2</name>
<evidence type="ECO:0000255" key="1">
    <source>
        <dbReference type="HAMAP-Rule" id="MF_00313"/>
    </source>
</evidence>